<name>ZAPB_HAEDU</name>
<organism>
    <name type="scientific">Haemophilus ducreyi (strain 35000HP / ATCC 700724)</name>
    <dbReference type="NCBI Taxonomy" id="233412"/>
    <lineage>
        <taxon>Bacteria</taxon>
        <taxon>Pseudomonadati</taxon>
        <taxon>Pseudomonadota</taxon>
        <taxon>Gammaproteobacteria</taxon>
        <taxon>Pasteurellales</taxon>
        <taxon>Pasteurellaceae</taxon>
        <taxon>Haemophilus</taxon>
    </lineage>
</organism>
<accession>Q7VLH3</accession>
<evidence type="ECO:0000255" key="1">
    <source>
        <dbReference type="HAMAP-Rule" id="MF_01196"/>
    </source>
</evidence>
<dbReference type="EMBL" id="AE017143">
    <property type="protein sequence ID" value="AAP96274.1"/>
    <property type="molecule type" value="Genomic_DNA"/>
</dbReference>
<dbReference type="RefSeq" id="WP_010945319.1">
    <property type="nucleotide sequence ID" value="NC_002940.2"/>
</dbReference>
<dbReference type="SMR" id="Q7VLH3"/>
<dbReference type="STRING" id="233412.HD_1472"/>
<dbReference type="GeneID" id="60732802"/>
<dbReference type="KEGG" id="hdu:HD_1472"/>
<dbReference type="eggNOG" id="COG3074">
    <property type="taxonomic scope" value="Bacteria"/>
</dbReference>
<dbReference type="HOGENOM" id="CLU_171174_0_0_6"/>
<dbReference type="OrthoDB" id="6554593at2"/>
<dbReference type="Proteomes" id="UP000001022">
    <property type="component" value="Chromosome"/>
</dbReference>
<dbReference type="GO" id="GO:0005737">
    <property type="term" value="C:cytoplasm"/>
    <property type="evidence" value="ECO:0007669"/>
    <property type="project" value="UniProtKB-SubCell"/>
</dbReference>
<dbReference type="GO" id="GO:0000917">
    <property type="term" value="P:division septum assembly"/>
    <property type="evidence" value="ECO:0007669"/>
    <property type="project" value="UniProtKB-KW"/>
</dbReference>
<dbReference type="GO" id="GO:0043093">
    <property type="term" value="P:FtsZ-dependent cytokinesis"/>
    <property type="evidence" value="ECO:0007669"/>
    <property type="project" value="UniProtKB-UniRule"/>
</dbReference>
<dbReference type="Gene3D" id="1.20.5.340">
    <property type="match status" value="1"/>
</dbReference>
<dbReference type="HAMAP" id="MF_01196">
    <property type="entry name" value="ZapB"/>
    <property type="match status" value="1"/>
</dbReference>
<dbReference type="InterPro" id="IPR009252">
    <property type="entry name" value="Cell_div_ZapB"/>
</dbReference>
<dbReference type="Pfam" id="PF06005">
    <property type="entry name" value="ZapB"/>
    <property type="match status" value="1"/>
</dbReference>
<keyword id="KW-0131">Cell cycle</keyword>
<keyword id="KW-0132">Cell division</keyword>
<keyword id="KW-0175">Coiled coil</keyword>
<keyword id="KW-0963">Cytoplasm</keyword>
<keyword id="KW-1185">Reference proteome</keyword>
<keyword id="KW-0717">Septation</keyword>
<proteinExistence type="inferred from homology"/>
<protein>
    <recommendedName>
        <fullName evidence="1">Cell division protein ZapB</fullName>
    </recommendedName>
</protein>
<gene>
    <name evidence="1" type="primary">zapB</name>
    <name type="ordered locus">HD_1472</name>
</gene>
<sequence length="72" mass="8543">MSLSIIDQLEEKIKQAVETIQLLQLEVEELKEKNNNLTQERDGLRQEHEQLKVEQQNFQERLRSLLGQIDNV</sequence>
<feature type="chain" id="PRO_0000333903" description="Cell division protein ZapB">
    <location>
        <begin position="1"/>
        <end position="72"/>
    </location>
</feature>
<feature type="coiled-coil region" evidence="1">
    <location>
        <begin position="3"/>
        <end position="71"/>
    </location>
</feature>
<reference key="1">
    <citation type="submission" date="2003-06" db="EMBL/GenBank/DDBJ databases">
        <title>The complete genome sequence of Haemophilus ducreyi.</title>
        <authorList>
            <person name="Munson R.S. Jr."/>
            <person name="Ray W.C."/>
            <person name="Mahairas G."/>
            <person name="Sabo P."/>
            <person name="Mungur R."/>
            <person name="Johnson L."/>
            <person name="Nguyen D."/>
            <person name="Wang J."/>
            <person name="Forst C."/>
            <person name="Hood L."/>
        </authorList>
    </citation>
    <scope>NUCLEOTIDE SEQUENCE [LARGE SCALE GENOMIC DNA]</scope>
    <source>
        <strain>35000HP / ATCC 700724</strain>
    </source>
</reference>
<comment type="function">
    <text evidence="1">Non-essential, abundant cell division factor that is required for proper Z-ring formation. It is recruited early to the divisome by direct interaction with FtsZ, stimulating Z-ring assembly and thereby promoting cell division earlier in the cell cycle. Its recruitment to the Z-ring requires functional FtsA or ZipA.</text>
</comment>
<comment type="subunit">
    <text evidence="1">Homodimer. The ends of the coiled-coil dimer bind to each other, forming polymers. Interacts with FtsZ.</text>
</comment>
<comment type="subcellular location">
    <subcellularLocation>
        <location>Cytoplasm</location>
    </subcellularLocation>
    <text evidence="1">Localizes to the septum at mid-cell, in a FtsZ-like pattern.</text>
</comment>
<comment type="similarity">
    <text evidence="1">Belongs to the ZapB family.</text>
</comment>